<evidence type="ECO:0000250" key="1"/>
<evidence type="ECO:0000255" key="2"/>
<evidence type="ECO:0000256" key="3">
    <source>
        <dbReference type="SAM" id="MobiDB-lite"/>
    </source>
</evidence>
<evidence type="ECO:0000305" key="4"/>
<organism>
    <name type="scientific">Thermosynechococcus vestitus (strain NIES-2133 / IAM M-273 / BP-1)</name>
    <dbReference type="NCBI Taxonomy" id="197221"/>
    <lineage>
        <taxon>Bacteria</taxon>
        <taxon>Bacillati</taxon>
        <taxon>Cyanobacteriota</taxon>
        <taxon>Cyanophyceae</taxon>
        <taxon>Acaryochloridales</taxon>
        <taxon>Thermosynechococcaceae</taxon>
        <taxon>Thermosynechococcus</taxon>
    </lineage>
</organism>
<reference key="1">
    <citation type="journal article" date="2002" name="DNA Res.">
        <title>Complete genome structure of the thermophilic cyanobacterium Thermosynechococcus elongatus BP-1.</title>
        <authorList>
            <person name="Nakamura Y."/>
            <person name="Kaneko T."/>
            <person name="Sato S."/>
            <person name="Ikeuchi M."/>
            <person name="Katoh H."/>
            <person name="Sasamoto S."/>
            <person name="Watanabe A."/>
            <person name="Iriguchi M."/>
            <person name="Kawashima K."/>
            <person name="Kimura T."/>
            <person name="Kishida Y."/>
            <person name="Kiyokawa C."/>
            <person name="Kohara M."/>
            <person name="Matsumoto M."/>
            <person name="Matsuno A."/>
            <person name="Nakazaki N."/>
            <person name="Shimpo S."/>
            <person name="Sugimoto M."/>
            <person name="Takeuchi C."/>
            <person name="Yamada M."/>
            <person name="Tabata S."/>
        </authorList>
    </citation>
    <scope>NUCLEOTIDE SEQUENCE [LARGE SCALE GENOMIC DNA]</scope>
    <source>
        <strain>NIES-2133 / IAM M-273 / BP-1</strain>
    </source>
</reference>
<gene>
    <name type="primary">yidC</name>
    <name type="ordered locus">tll0600</name>
</gene>
<keyword id="KW-0997">Cell inner membrane</keyword>
<keyword id="KW-1003">Cell membrane</keyword>
<keyword id="KW-0143">Chaperone</keyword>
<keyword id="KW-0472">Membrane</keyword>
<keyword id="KW-0653">Protein transport</keyword>
<keyword id="KW-1185">Reference proteome</keyword>
<keyword id="KW-0812">Transmembrane</keyword>
<keyword id="KW-1133">Transmembrane helix</keyword>
<keyword id="KW-0813">Transport</keyword>
<comment type="function">
    <text evidence="1">Required for the insertion and/or proper folding and/or complex formation of integral membrane proteins into the membrane. Involved in integration of membrane proteins that insert both dependently and independently of the Sec translocase complex, as well as at least some lipoproteins. Aids folding of multispanning membrane proteins (By similarity).</text>
</comment>
<comment type="function">
    <text evidence="1">Probably also aids protein insertion, folding and/or assembly of membrane complexes destined for the thylakoid.</text>
</comment>
<comment type="subunit">
    <text evidence="1">Interacts with the Sec translocase complex via SecD. Specifically interacts with transmembrane segments of nascent integral membrane proteins during membrane integration (By similarity).</text>
</comment>
<comment type="subcellular location">
    <subcellularLocation>
        <location evidence="1">Cell inner membrane</location>
        <topology evidence="1">Multi-pass membrane protein</topology>
    </subcellularLocation>
</comment>
<comment type="similarity">
    <text evidence="4">Belongs to the OXA1/ALB3/YidC family. Type 1 subfamily.</text>
</comment>
<accession>Q8DL96</accession>
<sequence>MDFGIGFLSNNVMLPILDFFYGIVPSYGLAIVALTLVVRFAVYPLSAGSIRNMRRMKVVQPIMQKRMQEIQQKYKDNPAEQQKAMAEVYREFGNPLAGCFPLLLQLPILFALFATLRGSPFADVNYQINLQIVPPDQPVLAQPFATKPQNIYVDEGVHFPIQAVVPSGTRIPVGQMVDLQFQTKEGKPFSELVAAYPNSHLQPKWQIIRGQERATIDREGHLQALQPGEVTVQGTIPGIAADKGFLFISALGHVGVIDQGELFITLPDGARQFNWGAIHWDILVMILGFGVSLYVNQLLSGQGSSNNPQQQTVNQLTPIIFSGMFLFFPLPAGVLLYMLIANIFQTVQTFILQREPLPENLQKLVEEQERAEAIKNRAPLPFEGKGAKGAKATKAKGNPSS</sequence>
<proteinExistence type="inferred from homology"/>
<feature type="chain" id="PRO_0000124757" description="Membrane protein insertase YidC">
    <location>
        <begin position="1"/>
        <end position="401"/>
    </location>
</feature>
<feature type="transmembrane region" description="Helical" evidence="2">
    <location>
        <begin position="12"/>
        <end position="32"/>
    </location>
</feature>
<feature type="transmembrane region" description="Helical" evidence="2">
    <location>
        <begin position="96"/>
        <end position="116"/>
    </location>
</feature>
<feature type="transmembrane region" description="Helical" evidence="2">
    <location>
        <begin position="275"/>
        <end position="295"/>
    </location>
</feature>
<feature type="transmembrane region" description="Helical" evidence="2">
    <location>
        <begin position="319"/>
        <end position="339"/>
    </location>
</feature>
<feature type="region of interest" description="Disordered" evidence="3">
    <location>
        <begin position="375"/>
        <end position="401"/>
    </location>
</feature>
<feature type="compositionally biased region" description="Low complexity" evidence="3">
    <location>
        <begin position="389"/>
        <end position="401"/>
    </location>
</feature>
<name>YIDC_THEVB</name>
<protein>
    <recommendedName>
        <fullName>Membrane protein insertase YidC</fullName>
    </recommendedName>
    <alternativeName>
        <fullName>Foldase YidC</fullName>
    </alternativeName>
    <alternativeName>
        <fullName>Membrane integrase YidC</fullName>
    </alternativeName>
    <alternativeName>
        <fullName>Membrane protein YidC</fullName>
    </alternativeName>
</protein>
<dbReference type="EMBL" id="BA000039">
    <property type="protein sequence ID" value="BAC08152.1"/>
    <property type="molecule type" value="Genomic_DNA"/>
</dbReference>
<dbReference type="RefSeq" id="NP_681390.1">
    <property type="nucleotide sequence ID" value="NC_004113.1"/>
</dbReference>
<dbReference type="RefSeq" id="WP_011056448.1">
    <property type="nucleotide sequence ID" value="NC_004113.1"/>
</dbReference>
<dbReference type="STRING" id="197221.gene:10747190"/>
<dbReference type="EnsemblBacteria" id="BAC08152">
    <property type="protein sequence ID" value="BAC08152"/>
    <property type="gene ID" value="BAC08152"/>
</dbReference>
<dbReference type="KEGG" id="tel:tll0600"/>
<dbReference type="PATRIC" id="fig|197221.4.peg.634"/>
<dbReference type="eggNOG" id="COG0706">
    <property type="taxonomic scope" value="Bacteria"/>
</dbReference>
<dbReference type="Proteomes" id="UP000000440">
    <property type="component" value="Chromosome"/>
</dbReference>
<dbReference type="GO" id="GO:0005886">
    <property type="term" value="C:plasma membrane"/>
    <property type="evidence" value="ECO:0007669"/>
    <property type="project" value="UniProtKB-SubCell"/>
</dbReference>
<dbReference type="GO" id="GO:0032977">
    <property type="term" value="F:membrane insertase activity"/>
    <property type="evidence" value="ECO:0007669"/>
    <property type="project" value="InterPro"/>
</dbReference>
<dbReference type="GO" id="GO:0051205">
    <property type="term" value="P:protein insertion into membrane"/>
    <property type="evidence" value="ECO:0007669"/>
    <property type="project" value="TreeGrafter"/>
</dbReference>
<dbReference type="GO" id="GO:0015031">
    <property type="term" value="P:protein transport"/>
    <property type="evidence" value="ECO:0007669"/>
    <property type="project" value="UniProtKB-KW"/>
</dbReference>
<dbReference type="CDD" id="cd20070">
    <property type="entry name" value="5TM_YidC_Alb3"/>
    <property type="match status" value="1"/>
</dbReference>
<dbReference type="InterPro" id="IPR001708">
    <property type="entry name" value="YidC/ALB3/OXA1/COX18"/>
</dbReference>
<dbReference type="InterPro" id="IPR028055">
    <property type="entry name" value="YidC/Oxa/ALB_C"/>
</dbReference>
<dbReference type="InterPro" id="IPR047196">
    <property type="entry name" value="YidC_ALB_C"/>
</dbReference>
<dbReference type="NCBIfam" id="NF002734">
    <property type="entry name" value="PRK02654.1"/>
    <property type="match status" value="1"/>
</dbReference>
<dbReference type="NCBIfam" id="TIGR03592">
    <property type="entry name" value="yidC_oxa1_cterm"/>
    <property type="match status" value="1"/>
</dbReference>
<dbReference type="PANTHER" id="PTHR12428:SF65">
    <property type="entry name" value="CYTOCHROME C OXIDASE ASSEMBLY PROTEIN COX18, MITOCHONDRIAL"/>
    <property type="match status" value="1"/>
</dbReference>
<dbReference type="PANTHER" id="PTHR12428">
    <property type="entry name" value="OXA1"/>
    <property type="match status" value="1"/>
</dbReference>
<dbReference type="Pfam" id="PF02096">
    <property type="entry name" value="60KD_IMP"/>
    <property type="match status" value="1"/>
</dbReference>